<reference key="1">
    <citation type="journal article" date="2000" name="Mol. Phylogenet. Evol.">
        <title>Molecular phylogeny of European muroid rodents based on complete cytochrome b sequences.</title>
        <authorList>
            <person name="Martin Y."/>
            <person name="Gerlach G."/>
            <person name="Schlotterer C."/>
            <person name="Meyer A."/>
        </authorList>
    </citation>
    <scope>NUCLEOTIDE SEQUENCE [GENOMIC DNA]</scope>
</reference>
<proteinExistence type="inferred from homology"/>
<comment type="function">
    <text evidence="2">Component of the ubiquinol-cytochrome c reductase complex (complex III or cytochrome b-c1 complex) that is part of the mitochondrial respiratory chain. The b-c1 complex mediates electron transfer from ubiquinol to cytochrome c. Contributes to the generation of a proton gradient across the mitochondrial membrane that is then used for ATP synthesis.</text>
</comment>
<comment type="cofactor">
    <cofactor evidence="2">
        <name>heme b</name>
        <dbReference type="ChEBI" id="CHEBI:60344"/>
    </cofactor>
    <text evidence="2">Binds 2 heme b groups non-covalently.</text>
</comment>
<comment type="subunit">
    <text evidence="2">The cytochrome bc1 complex contains 11 subunits: 3 respiratory subunits (MT-CYB, CYC1 and UQCRFS1), 2 core proteins (UQCRC1 and UQCRC2) and 6 low-molecular weight proteins (UQCRH/QCR6, UQCRB/QCR7, UQCRQ/QCR8, UQCR10/QCR9, UQCR11/QCR10 and a cleavage product of UQCRFS1). This cytochrome bc1 complex then forms a dimer.</text>
</comment>
<comment type="subcellular location">
    <subcellularLocation>
        <location evidence="2">Mitochondrion inner membrane</location>
        <topology evidence="2">Multi-pass membrane protein</topology>
    </subcellularLocation>
</comment>
<comment type="miscellaneous">
    <text evidence="1">Heme 1 (or BL or b562) is low-potential and absorbs at about 562 nm, and heme 2 (or BH or b566) is high-potential and absorbs at about 566 nm.</text>
</comment>
<comment type="similarity">
    <text evidence="3 4">Belongs to the cytochrome b family.</text>
</comment>
<comment type="caution">
    <text evidence="2">The full-length protein contains only eight transmembrane helices, not nine as predicted by bioinformatics tools.</text>
</comment>
<dbReference type="EMBL" id="AF159401">
    <property type="protein sequence ID" value="AAD49246.1"/>
    <property type="molecule type" value="Genomic_DNA"/>
</dbReference>
<dbReference type="SMR" id="Q9TEX8"/>
<dbReference type="GO" id="GO:0005743">
    <property type="term" value="C:mitochondrial inner membrane"/>
    <property type="evidence" value="ECO:0007669"/>
    <property type="project" value="UniProtKB-SubCell"/>
</dbReference>
<dbReference type="GO" id="GO:0045275">
    <property type="term" value="C:respiratory chain complex III"/>
    <property type="evidence" value="ECO:0007669"/>
    <property type="project" value="InterPro"/>
</dbReference>
<dbReference type="GO" id="GO:0046872">
    <property type="term" value="F:metal ion binding"/>
    <property type="evidence" value="ECO:0007669"/>
    <property type="project" value="UniProtKB-KW"/>
</dbReference>
<dbReference type="GO" id="GO:0008121">
    <property type="term" value="F:ubiquinol-cytochrome-c reductase activity"/>
    <property type="evidence" value="ECO:0007669"/>
    <property type="project" value="InterPro"/>
</dbReference>
<dbReference type="GO" id="GO:0006122">
    <property type="term" value="P:mitochondrial electron transport, ubiquinol to cytochrome c"/>
    <property type="evidence" value="ECO:0007669"/>
    <property type="project" value="TreeGrafter"/>
</dbReference>
<dbReference type="CDD" id="cd00290">
    <property type="entry name" value="cytochrome_b_C"/>
    <property type="match status" value="1"/>
</dbReference>
<dbReference type="CDD" id="cd00284">
    <property type="entry name" value="Cytochrome_b_N"/>
    <property type="match status" value="1"/>
</dbReference>
<dbReference type="FunFam" id="1.20.810.10:FF:000002">
    <property type="entry name" value="Cytochrome b"/>
    <property type="match status" value="1"/>
</dbReference>
<dbReference type="Gene3D" id="1.20.810.10">
    <property type="entry name" value="Cytochrome Bc1 Complex, Chain C"/>
    <property type="match status" value="1"/>
</dbReference>
<dbReference type="InterPro" id="IPR005798">
    <property type="entry name" value="Cyt_b/b6_C"/>
</dbReference>
<dbReference type="InterPro" id="IPR036150">
    <property type="entry name" value="Cyt_b/b6_C_sf"/>
</dbReference>
<dbReference type="InterPro" id="IPR005797">
    <property type="entry name" value="Cyt_b/b6_N"/>
</dbReference>
<dbReference type="InterPro" id="IPR027387">
    <property type="entry name" value="Cytb/b6-like_sf"/>
</dbReference>
<dbReference type="InterPro" id="IPR030689">
    <property type="entry name" value="Cytochrome_b"/>
</dbReference>
<dbReference type="InterPro" id="IPR048260">
    <property type="entry name" value="Cytochrome_b_C_euk/bac"/>
</dbReference>
<dbReference type="InterPro" id="IPR048259">
    <property type="entry name" value="Cytochrome_b_N_euk/bac"/>
</dbReference>
<dbReference type="InterPro" id="IPR016174">
    <property type="entry name" value="Di-haem_cyt_TM"/>
</dbReference>
<dbReference type="PANTHER" id="PTHR19271">
    <property type="entry name" value="CYTOCHROME B"/>
    <property type="match status" value="1"/>
</dbReference>
<dbReference type="PANTHER" id="PTHR19271:SF16">
    <property type="entry name" value="CYTOCHROME B"/>
    <property type="match status" value="1"/>
</dbReference>
<dbReference type="Pfam" id="PF00032">
    <property type="entry name" value="Cytochrom_B_C"/>
    <property type="match status" value="1"/>
</dbReference>
<dbReference type="Pfam" id="PF00033">
    <property type="entry name" value="Cytochrome_B"/>
    <property type="match status" value="1"/>
</dbReference>
<dbReference type="PIRSF" id="PIRSF038885">
    <property type="entry name" value="COB"/>
    <property type="match status" value="1"/>
</dbReference>
<dbReference type="SUPFAM" id="SSF81648">
    <property type="entry name" value="a domain/subunit of cytochrome bc1 complex (Ubiquinol-cytochrome c reductase)"/>
    <property type="match status" value="1"/>
</dbReference>
<dbReference type="SUPFAM" id="SSF81342">
    <property type="entry name" value="Transmembrane di-heme cytochromes"/>
    <property type="match status" value="1"/>
</dbReference>
<dbReference type="PROSITE" id="PS51003">
    <property type="entry name" value="CYTB_CTER"/>
    <property type="match status" value="1"/>
</dbReference>
<dbReference type="PROSITE" id="PS51002">
    <property type="entry name" value="CYTB_NTER"/>
    <property type="match status" value="1"/>
</dbReference>
<accession>Q9TEX8</accession>
<protein>
    <recommendedName>
        <fullName>Cytochrome b</fullName>
    </recommendedName>
    <alternativeName>
        <fullName>Complex III subunit 3</fullName>
    </alternativeName>
    <alternativeName>
        <fullName>Complex III subunit III</fullName>
    </alternativeName>
    <alternativeName>
        <fullName>Cytochrome b-c1 complex subunit 3</fullName>
    </alternativeName>
    <alternativeName>
        <fullName>Ubiquinol-cytochrome-c reductase complex cytochrome b subunit</fullName>
    </alternativeName>
</protein>
<evidence type="ECO:0000250" key="1"/>
<evidence type="ECO:0000250" key="2">
    <source>
        <dbReference type="UniProtKB" id="P00157"/>
    </source>
</evidence>
<evidence type="ECO:0000255" key="3">
    <source>
        <dbReference type="PROSITE-ProRule" id="PRU00967"/>
    </source>
</evidence>
<evidence type="ECO:0000255" key="4">
    <source>
        <dbReference type="PROSITE-ProRule" id="PRU00968"/>
    </source>
</evidence>
<organism>
    <name type="scientific">Myodes glareolus</name>
    <name type="common">Bank vole</name>
    <name type="synonym">Clethrionomys glareolus</name>
    <dbReference type="NCBI Taxonomy" id="447135"/>
    <lineage>
        <taxon>Eukaryota</taxon>
        <taxon>Metazoa</taxon>
        <taxon>Chordata</taxon>
        <taxon>Craniata</taxon>
        <taxon>Vertebrata</taxon>
        <taxon>Euteleostomi</taxon>
        <taxon>Mammalia</taxon>
        <taxon>Eutheria</taxon>
        <taxon>Euarchontoglires</taxon>
        <taxon>Glires</taxon>
        <taxon>Rodentia</taxon>
        <taxon>Myomorpha</taxon>
        <taxon>Muroidea</taxon>
        <taxon>Cricetidae</taxon>
        <taxon>Arvicolinae</taxon>
        <taxon>Myodes</taxon>
    </lineage>
</organism>
<name>CYB_MYOGA</name>
<geneLocation type="mitochondrion"/>
<feature type="chain" id="PRO_0000060794" description="Cytochrome b">
    <location>
        <begin position="1"/>
        <end position="380"/>
    </location>
</feature>
<feature type="transmembrane region" description="Helical" evidence="2">
    <location>
        <begin position="33"/>
        <end position="53"/>
    </location>
</feature>
<feature type="transmembrane region" description="Helical" evidence="2">
    <location>
        <begin position="77"/>
        <end position="98"/>
    </location>
</feature>
<feature type="transmembrane region" description="Helical" evidence="2">
    <location>
        <begin position="113"/>
        <end position="133"/>
    </location>
</feature>
<feature type="transmembrane region" description="Helical" evidence="2">
    <location>
        <begin position="178"/>
        <end position="198"/>
    </location>
</feature>
<feature type="transmembrane region" description="Helical" evidence="2">
    <location>
        <begin position="226"/>
        <end position="246"/>
    </location>
</feature>
<feature type="transmembrane region" description="Helical" evidence="2">
    <location>
        <begin position="288"/>
        <end position="308"/>
    </location>
</feature>
<feature type="transmembrane region" description="Helical" evidence="2">
    <location>
        <begin position="320"/>
        <end position="340"/>
    </location>
</feature>
<feature type="transmembrane region" description="Helical" evidence="2">
    <location>
        <begin position="347"/>
        <end position="367"/>
    </location>
</feature>
<feature type="binding site" description="axial binding residue" evidence="2">
    <location>
        <position position="83"/>
    </location>
    <ligand>
        <name>heme b</name>
        <dbReference type="ChEBI" id="CHEBI:60344"/>
        <label>b562</label>
    </ligand>
    <ligandPart>
        <name>Fe</name>
        <dbReference type="ChEBI" id="CHEBI:18248"/>
    </ligandPart>
</feature>
<feature type="binding site" description="axial binding residue" evidence="2">
    <location>
        <position position="97"/>
    </location>
    <ligand>
        <name>heme b</name>
        <dbReference type="ChEBI" id="CHEBI:60344"/>
        <label>b566</label>
    </ligand>
    <ligandPart>
        <name>Fe</name>
        <dbReference type="ChEBI" id="CHEBI:18248"/>
    </ligandPart>
</feature>
<feature type="binding site" description="axial binding residue" evidence="2">
    <location>
        <position position="182"/>
    </location>
    <ligand>
        <name>heme b</name>
        <dbReference type="ChEBI" id="CHEBI:60344"/>
        <label>b562</label>
    </ligand>
    <ligandPart>
        <name>Fe</name>
        <dbReference type="ChEBI" id="CHEBI:18248"/>
    </ligandPart>
</feature>
<feature type="binding site" description="axial binding residue" evidence="2">
    <location>
        <position position="196"/>
    </location>
    <ligand>
        <name>heme b</name>
        <dbReference type="ChEBI" id="CHEBI:60344"/>
        <label>b566</label>
    </ligand>
    <ligandPart>
        <name>Fe</name>
        <dbReference type="ChEBI" id="CHEBI:18248"/>
    </ligandPart>
</feature>
<feature type="binding site" evidence="2">
    <location>
        <position position="201"/>
    </location>
    <ligand>
        <name>a ubiquinone</name>
        <dbReference type="ChEBI" id="CHEBI:16389"/>
    </ligand>
</feature>
<sequence length="380" mass="42880">MTIIRKKHPLIKIINHSFIDLPAPSNISSWWNFGSLLGLCLIIQILTGLFLAMHYTSDTSTAFSSVTHICRDVNYGWLIRYMHANGASMFFICLFLHVGRGMYYGSYNMIETWNMGIILLFAVMATAFMGYVLPWGQMSFWGATVITNLLSAIPYIGTTLVEWIWGGFSVDKATLTRFFAFHFILPFIITALVFVHLLFLHETGSNNPTGLNSDADKIPFHPYYTIKDFLGVLILLMGLMILVLFFPDVLGDPDNYTPANPLNTPAHIKPEWYFLFAYAILRSIPNKLGGVLALILSILILALLPLLHTSKQRGLTFRPITQTMYWILVADLLILTWIGGQPVEYPFIIIGQMASIAYFAIIVIFMPMAGMIENNILDLD</sequence>
<gene>
    <name type="primary">MT-CYB</name>
    <name type="synonym">COB</name>
    <name type="synonym">CYTB</name>
    <name type="synonym">MTCYB</name>
</gene>
<keyword id="KW-0249">Electron transport</keyword>
<keyword id="KW-0349">Heme</keyword>
<keyword id="KW-0408">Iron</keyword>
<keyword id="KW-0472">Membrane</keyword>
<keyword id="KW-0479">Metal-binding</keyword>
<keyword id="KW-0496">Mitochondrion</keyword>
<keyword id="KW-0999">Mitochondrion inner membrane</keyword>
<keyword id="KW-0679">Respiratory chain</keyword>
<keyword id="KW-0812">Transmembrane</keyword>
<keyword id="KW-1133">Transmembrane helix</keyword>
<keyword id="KW-0813">Transport</keyword>
<keyword id="KW-0830">Ubiquinone</keyword>